<evidence type="ECO:0000250" key="1"/>
<evidence type="ECO:0000255" key="2"/>
<evidence type="ECO:0000305" key="3"/>
<name>DF250_ARATH</name>
<sequence>MKLAAIFLVSCVLLSLLPSLTIAEKRPWCPTRKQIFDGSCNRTDYTQCFNDLRNTWDDIGDLCPTDCTCTPQPQNKRLCYCRYLPCPST</sequence>
<protein>
    <recommendedName>
        <fullName>Defensin-like protein 250</fullName>
    </recommendedName>
    <alternativeName>
        <fullName>S locus cysteine-rich-like protein 8</fullName>
        <shortName>Protein SCRL8</shortName>
        <shortName>SCR-like protein 8</shortName>
    </alternativeName>
</protein>
<gene>
    <name type="primary">SCRL8</name>
    <name type="ordered locus">At1g60983</name>
    <name type="ORF">T7P1</name>
</gene>
<accession>P82627</accession>
<reference evidence="3" key="1">
    <citation type="journal article" date="2000" name="Nature">
        <title>Sequence and analysis of chromosome 1 of the plant Arabidopsis thaliana.</title>
        <authorList>
            <person name="Theologis A."/>
            <person name="Ecker J.R."/>
            <person name="Palm C.J."/>
            <person name="Federspiel N.A."/>
            <person name="Kaul S."/>
            <person name="White O."/>
            <person name="Alonso J."/>
            <person name="Altafi H."/>
            <person name="Araujo R."/>
            <person name="Bowman C.L."/>
            <person name="Brooks S.Y."/>
            <person name="Buehler E."/>
            <person name="Chan A."/>
            <person name="Chao Q."/>
            <person name="Chen H."/>
            <person name="Cheuk R.F."/>
            <person name="Chin C.W."/>
            <person name="Chung M.K."/>
            <person name="Conn L."/>
            <person name="Conway A.B."/>
            <person name="Conway A.R."/>
            <person name="Creasy T.H."/>
            <person name="Dewar K."/>
            <person name="Dunn P."/>
            <person name="Etgu P."/>
            <person name="Feldblyum T.V."/>
            <person name="Feng J.-D."/>
            <person name="Fong B."/>
            <person name="Fujii C.Y."/>
            <person name="Gill J.E."/>
            <person name="Goldsmith A.D."/>
            <person name="Haas B."/>
            <person name="Hansen N.F."/>
            <person name="Hughes B."/>
            <person name="Huizar L."/>
            <person name="Hunter J.L."/>
            <person name="Jenkins J."/>
            <person name="Johnson-Hopson C."/>
            <person name="Khan S."/>
            <person name="Khaykin E."/>
            <person name="Kim C.J."/>
            <person name="Koo H.L."/>
            <person name="Kremenetskaia I."/>
            <person name="Kurtz D.B."/>
            <person name="Kwan A."/>
            <person name="Lam B."/>
            <person name="Langin-Hooper S."/>
            <person name="Lee A."/>
            <person name="Lee J.M."/>
            <person name="Lenz C.A."/>
            <person name="Li J.H."/>
            <person name="Li Y.-P."/>
            <person name="Lin X."/>
            <person name="Liu S.X."/>
            <person name="Liu Z.A."/>
            <person name="Luros J.S."/>
            <person name="Maiti R."/>
            <person name="Marziali A."/>
            <person name="Militscher J."/>
            <person name="Miranda M."/>
            <person name="Nguyen M."/>
            <person name="Nierman W.C."/>
            <person name="Osborne B.I."/>
            <person name="Pai G."/>
            <person name="Peterson J."/>
            <person name="Pham P.K."/>
            <person name="Rizzo M."/>
            <person name="Rooney T."/>
            <person name="Rowley D."/>
            <person name="Sakano H."/>
            <person name="Salzberg S.L."/>
            <person name="Schwartz J.R."/>
            <person name="Shinn P."/>
            <person name="Southwick A.M."/>
            <person name="Sun H."/>
            <person name="Tallon L.J."/>
            <person name="Tambunga G."/>
            <person name="Toriumi M.J."/>
            <person name="Town C.D."/>
            <person name="Utterback T."/>
            <person name="Van Aken S."/>
            <person name="Vaysberg M."/>
            <person name="Vysotskaia V.S."/>
            <person name="Walker M."/>
            <person name="Wu D."/>
            <person name="Yu G."/>
            <person name="Fraser C.M."/>
            <person name="Venter J.C."/>
            <person name="Davis R.W."/>
        </authorList>
    </citation>
    <scope>NUCLEOTIDE SEQUENCE [LARGE SCALE GENOMIC DNA]</scope>
    <source>
        <strain>cv. Columbia</strain>
    </source>
</reference>
<reference key="2">
    <citation type="journal article" date="2017" name="Plant J.">
        <title>Araport11: a complete reannotation of the Arabidopsis thaliana reference genome.</title>
        <authorList>
            <person name="Cheng C.Y."/>
            <person name="Krishnakumar V."/>
            <person name="Chan A.P."/>
            <person name="Thibaud-Nissen F."/>
            <person name="Schobel S."/>
            <person name="Town C.D."/>
        </authorList>
    </citation>
    <scope>GENOME REANNOTATION</scope>
    <source>
        <strain>cv. Columbia</strain>
    </source>
</reference>
<reference evidence="3" key="3">
    <citation type="journal article" date="2001" name="Plant Mol. Biol.">
        <title>Two large Arabidopsis thaliana gene families are homologous to the Brassica gene superfamily that encodes pollen coat proteins and the male component of the self-incompatibility response.</title>
        <authorList>
            <person name="Vanoosthuyse V."/>
            <person name="Miege C."/>
            <person name="Dumas C."/>
            <person name="Cock J.M."/>
        </authorList>
    </citation>
    <scope>IDENTIFICATION</scope>
</reference>
<reference key="4">
    <citation type="journal article" date="2005" name="Plant Physiol.">
        <title>Genome organization of more than 300 defensin-like genes in Arabidopsis.</title>
        <authorList>
            <person name="Silverstein K.A.T."/>
            <person name="Graham M.A."/>
            <person name="Paape T.D."/>
            <person name="VandenBosch K.A."/>
        </authorList>
    </citation>
    <scope>GENE FAMILY</scope>
</reference>
<dbReference type="EMBL" id="AC018908">
    <property type="status" value="NOT_ANNOTATED_CDS"/>
    <property type="molecule type" value="Genomic_DNA"/>
</dbReference>
<dbReference type="EMBL" id="CP002684">
    <property type="protein sequence ID" value="AEE33756.1"/>
    <property type="molecule type" value="Genomic_DNA"/>
</dbReference>
<dbReference type="RefSeq" id="NP_001031212.1">
    <property type="nucleotide sequence ID" value="NM_001036135.1"/>
</dbReference>
<dbReference type="PaxDb" id="3702-AT1G60983.1"/>
<dbReference type="EnsemblPlants" id="AT1G60983.1">
    <property type="protein sequence ID" value="AT1G60983.1"/>
    <property type="gene ID" value="AT1G60983"/>
</dbReference>
<dbReference type="GeneID" id="3767591"/>
<dbReference type="Gramene" id="AT1G60983.1">
    <property type="protein sequence ID" value="AT1G60983.1"/>
    <property type="gene ID" value="AT1G60983"/>
</dbReference>
<dbReference type="KEGG" id="ath:AT1G60983"/>
<dbReference type="Araport" id="AT1G60983"/>
<dbReference type="TAIR" id="AT1G60983">
    <property type="gene designation" value="SCRL8"/>
</dbReference>
<dbReference type="HOGENOM" id="CLU_174283_0_0_1"/>
<dbReference type="InParanoid" id="P82627"/>
<dbReference type="OMA" id="TEIRPWC"/>
<dbReference type="PhylomeDB" id="P82627"/>
<dbReference type="PRO" id="PR:P82627"/>
<dbReference type="Proteomes" id="UP000006548">
    <property type="component" value="Chromosome 1"/>
</dbReference>
<dbReference type="ExpressionAtlas" id="P82627">
    <property type="expression patterns" value="baseline"/>
</dbReference>
<dbReference type="GO" id="GO:0005576">
    <property type="term" value="C:extracellular region"/>
    <property type="evidence" value="ECO:0007669"/>
    <property type="project" value="UniProtKB-SubCell"/>
</dbReference>
<dbReference type="GO" id="GO:0050832">
    <property type="term" value="P:defense response to fungus"/>
    <property type="evidence" value="ECO:0007669"/>
    <property type="project" value="UniProtKB-KW"/>
</dbReference>
<dbReference type="GO" id="GO:0031640">
    <property type="term" value="P:killing of cells of another organism"/>
    <property type="evidence" value="ECO:0007669"/>
    <property type="project" value="UniProtKB-KW"/>
</dbReference>
<dbReference type="GO" id="GO:0007165">
    <property type="term" value="P:signal transduction"/>
    <property type="evidence" value="ECO:0007669"/>
    <property type="project" value="InterPro"/>
</dbReference>
<dbReference type="InterPro" id="IPR010682">
    <property type="entry name" value="SCRL"/>
</dbReference>
<dbReference type="PANTHER" id="PTHR34450">
    <property type="entry name" value="DEFENSIN-LIKE PROTEIN 245-RELATED"/>
    <property type="match status" value="1"/>
</dbReference>
<dbReference type="PANTHER" id="PTHR34450:SF10">
    <property type="entry name" value="DEFENSIN-LIKE PROTEIN 245-RELATED"/>
    <property type="match status" value="1"/>
</dbReference>
<dbReference type="Pfam" id="PF06876">
    <property type="entry name" value="SCRL"/>
    <property type="match status" value="1"/>
</dbReference>
<organism evidence="3">
    <name type="scientific">Arabidopsis thaliana</name>
    <name type="common">Mouse-ear cress</name>
    <dbReference type="NCBI Taxonomy" id="3702"/>
    <lineage>
        <taxon>Eukaryota</taxon>
        <taxon>Viridiplantae</taxon>
        <taxon>Streptophyta</taxon>
        <taxon>Embryophyta</taxon>
        <taxon>Tracheophyta</taxon>
        <taxon>Spermatophyta</taxon>
        <taxon>Magnoliopsida</taxon>
        <taxon>eudicotyledons</taxon>
        <taxon>Gunneridae</taxon>
        <taxon>Pentapetalae</taxon>
        <taxon>rosids</taxon>
        <taxon>malvids</taxon>
        <taxon>Brassicales</taxon>
        <taxon>Brassicaceae</taxon>
        <taxon>Camelineae</taxon>
        <taxon>Arabidopsis</taxon>
    </lineage>
</organism>
<keyword id="KW-0929">Antimicrobial</keyword>
<keyword id="KW-1015">Disulfide bond</keyword>
<keyword id="KW-0295">Fungicide</keyword>
<keyword id="KW-0611">Plant defense</keyword>
<keyword id="KW-1185">Reference proteome</keyword>
<keyword id="KW-0964">Secreted</keyword>
<keyword id="KW-0732">Signal</keyword>
<comment type="subcellular location">
    <subcellularLocation>
        <location evidence="1">Secreted</location>
    </subcellularLocation>
</comment>
<comment type="similarity">
    <text evidence="3">Belongs to the DEFL family.</text>
</comment>
<feature type="signal peptide" evidence="2">
    <location>
        <begin position="1"/>
        <end position="23"/>
    </location>
</feature>
<feature type="chain" id="PRO_0000031934" description="Defensin-like protein 250">
    <location>
        <begin position="24"/>
        <end position="89"/>
    </location>
</feature>
<feature type="disulfide bond" evidence="1">
    <location>
        <begin position="29"/>
        <end position="86"/>
    </location>
</feature>
<feature type="disulfide bond" evidence="1">
    <location>
        <begin position="40"/>
        <end position="69"/>
    </location>
</feature>
<feature type="disulfide bond" evidence="1">
    <location>
        <begin position="48"/>
        <end position="79"/>
    </location>
</feature>
<feature type="disulfide bond" evidence="1">
    <location>
        <begin position="67"/>
        <end position="81"/>
    </location>
</feature>
<proteinExistence type="inferred from homology"/>